<feature type="chain" id="PRO_0000306256" description="Ectopic P granules protein 5 homolog">
    <location>
        <begin position="1"/>
        <end position="2572"/>
    </location>
</feature>
<feature type="region of interest" description="Disordered" evidence="3">
    <location>
        <begin position="1"/>
        <end position="68"/>
    </location>
</feature>
<feature type="region of interest" description="Disordered" evidence="3">
    <location>
        <begin position="84"/>
        <end position="125"/>
    </location>
</feature>
<feature type="coiled-coil region" evidence="2">
    <location>
        <begin position="1600"/>
        <end position="1626"/>
    </location>
</feature>
<feature type="compositionally biased region" description="Basic residues" evidence="3">
    <location>
        <begin position="7"/>
        <end position="25"/>
    </location>
</feature>
<comment type="function">
    <text evidence="1">Involved in autophagy. May play a role in a late step of autophagy, such as clearance of autophagosomal cargo. Plays a key role in innate and adaptive immune response triggered by unmethylated cytidine-phosphate-guanosine (CpG) dinucleotides from pathogens, and mediated by the nucleotide-sensing receptor TLR9. It is necessary for the translocation of CpG dinucleotides from early endosomes to late endosomes and lysosomes, where TLR9 is located.</text>
</comment>
<comment type="subunit">
    <text evidence="1">Interacts with RAN.</text>
</comment>
<comment type="subcellular location">
    <subcellularLocation>
        <location evidence="1">Cytoplasm</location>
        <location evidence="1">Perinuclear region</location>
    </subcellularLocation>
    <subcellularLocation>
        <location evidence="1">Lysosome</location>
    </subcellularLocation>
</comment>
<comment type="similarity">
    <text evidence="4">Belongs to the EPG5 family.</text>
</comment>
<gene>
    <name type="primary">Epg5</name>
    <name type="synonym">Kiaa1632</name>
</gene>
<dbReference type="EMBL" id="AC126553">
    <property type="status" value="NOT_ANNOTATED_CDS"/>
    <property type="molecule type" value="Genomic_DNA"/>
</dbReference>
<dbReference type="EMBL" id="AK122536">
    <property type="protein sequence ID" value="BAC65818.1"/>
    <property type="molecule type" value="mRNA"/>
</dbReference>
<dbReference type="CCDS" id="CCDS57126.1"/>
<dbReference type="RefSeq" id="NP_001182562.1">
    <property type="nucleotide sequence ID" value="NM_001195633.2"/>
</dbReference>
<dbReference type="SMR" id="Q80TA9"/>
<dbReference type="BioGRID" id="491728">
    <property type="interactions" value="1"/>
</dbReference>
<dbReference type="FunCoup" id="Q80TA9">
    <property type="interactions" value="4252"/>
</dbReference>
<dbReference type="STRING" id="10090.ENSMUSP00000038681"/>
<dbReference type="GlyGen" id="Q80TA9">
    <property type="glycosylation" value="2 sites"/>
</dbReference>
<dbReference type="iPTMnet" id="Q80TA9"/>
<dbReference type="PhosphoSitePlus" id="Q80TA9"/>
<dbReference type="jPOST" id="Q80TA9"/>
<dbReference type="PaxDb" id="10090-ENSMUSP00000038681"/>
<dbReference type="PeptideAtlas" id="Q80TA9"/>
<dbReference type="ProteomicsDB" id="275751"/>
<dbReference type="Pumba" id="Q80TA9"/>
<dbReference type="Antibodypedia" id="22425">
    <property type="antibodies" value="74 antibodies from 14 providers"/>
</dbReference>
<dbReference type="Ensembl" id="ENSMUST00000044622.7">
    <property type="protein sequence ID" value="ENSMUSP00000038681.6"/>
    <property type="gene ID" value="ENSMUSG00000039840.9"/>
</dbReference>
<dbReference type="GeneID" id="100502841"/>
<dbReference type="KEGG" id="mmu:100502841"/>
<dbReference type="UCSC" id="uc008fsa.2">
    <property type="organism name" value="mouse"/>
</dbReference>
<dbReference type="AGR" id="MGI:1918673"/>
<dbReference type="CTD" id="57724"/>
<dbReference type="MGI" id="MGI:1918673">
    <property type="gene designation" value="Epg5"/>
</dbReference>
<dbReference type="VEuPathDB" id="HostDB:ENSMUSG00000039840"/>
<dbReference type="eggNOG" id="KOG3622">
    <property type="taxonomic scope" value="Eukaryota"/>
</dbReference>
<dbReference type="GeneTree" id="ENSGT00390000007354"/>
<dbReference type="HOGENOM" id="CLU_000773_0_0_1"/>
<dbReference type="InParanoid" id="Q80TA9"/>
<dbReference type="OMA" id="LYCYEAE"/>
<dbReference type="OrthoDB" id="75419at2759"/>
<dbReference type="PhylomeDB" id="Q80TA9"/>
<dbReference type="TreeFam" id="TF313847"/>
<dbReference type="BioGRID-ORCS" id="100502841">
    <property type="hits" value="14 hits in 78 CRISPR screens"/>
</dbReference>
<dbReference type="ChiTaRS" id="Epg5">
    <property type="organism name" value="mouse"/>
</dbReference>
<dbReference type="PRO" id="PR:Q80TA9"/>
<dbReference type="Proteomes" id="UP000000589">
    <property type="component" value="Chromosome 18"/>
</dbReference>
<dbReference type="RNAct" id="Q80TA9">
    <property type="molecule type" value="protein"/>
</dbReference>
<dbReference type="Bgee" id="ENSMUSG00000039840">
    <property type="expression patterns" value="Expressed in hindlimb stylopod muscle and 61 other cell types or tissues"/>
</dbReference>
<dbReference type="GO" id="GO:0005764">
    <property type="term" value="C:lysosome"/>
    <property type="evidence" value="ECO:0000250"/>
    <property type="project" value="UniProtKB"/>
</dbReference>
<dbReference type="GO" id="GO:0048471">
    <property type="term" value="C:perinuclear region of cytoplasm"/>
    <property type="evidence" value="ECO:0000250"/>
    <property type="project" value="UniProtKB"/>
</dbReference>
<dbReference type="GO" id="GO:0060249">
    <property type="term" value="P:anatomical structure homeostasis"/>
    <property type="evidence" value="ECO:0000315"/>
    <property type="project" value="MGI"/>
</dbReference>
<dbReference type="GO" id="GO:0006915">
    <property type="term" value="P:apoptotic process"/>
    <property type="evidence" value="ECO:0000315"/>
    <property type="project" value="MGI"/>
</dbReference>
<dbReference type="GO" id="GO:0097352">
    <property type="term" value="P:autophagosome maturation"/>
    <property type="evidence" value="ECO:0000315"/>
    <property type="project" value="MGI"/>
</dbReference>
<dbReference type="GO" id="GO:0006914">
    <property type="term" value="P:autophagy"/>
    <property type="evidence" value="ECO:0000315"/>
    <property type="project" value="MGI"/>
</dbReference>
<dbReference type="GO" id="GO:1990786">
    <property type="term" value="P:cellular response to dsDNA"/>
    <property type="evidence" value="ECO:0000250"/>
    <property type="project" value="UniProtKB"/>
</dbReference>
<dbReference type="GO" id="GO:0051607">
    <property type="term" value="P:defense response to virus"/>
    <property type="evidence" value="ECO:0000315"/>
    <property type="project" value="MGI"/>
</dbReference>
<dbReference type="GO" id="GO:0032456">
    <property type="term" value="P:endocytic recycling"/>
    <property type="evidence" value="ECO:0000315"/>
    <property type="project" value="MGI"/>
</dbReference>
<dbReference type="GO" id="GO:0008333">
    <property type="term" value="P:endosome to lysosome transport"/>
    <property type="evidence" value="ECO:0000250"/>
    <property type="project" value="UniProtKB"/>
</dbReference>
<dbReference type="GO" id="GO:0010467">
    <property type="term" value="P:gene expression"/>
    <property type="evidence" value="ECO:0000315"/>
    <property type="project" value="MGI"/>
</dbReference>
<dbReference type="GO" id="GO:0048872">
    <property type="term" value="P:homeostasis of number of cells"/>
    <property type="evidence" value="ECO:0000315"/>
    <property type="project" value="MGI"/>
</dbReference>
<dbReference type="GO" id="GO:0048877">
    <property type="term" value="P:homeostasis of number of retina cells"/>
    <property type="evidence" value="ECO:0000315"/>
    <property type="project" value="MGI"/>
</dbReference>
<dbReference type="GO" id="GO:0048874">
    <property type="term" value="P:host-mediated regulation of intestinal microbiota composition"/>
    <property type="evidence" value="ECO:0000315"/>
    <property type="project" value="MGI"/>
</dbReference>
<dbReference type="GO" id="GO:0070841">
    <property type="term" value="P:inclusion body assembly"/>
    <property type="evidence" value="ECO:0000315"/>
    <property type="project" value="MGI"/>
</dbReference>
<dbReference type="GO" id="GO:0006954">
    <property type="term" value="P:inflammatory response"/>
    <property type="evidence" value="ECO:0000315"/>
    <property type="project" value="MGI"/>
</dbReference>
<dbReference type="GO" id="GO:0045087">
    <property type="term" value="P:innate immune response"/>
    <property type="evidence" value="ECO:0000315"/>
    <property type="project" value="MGI"/>
</dbReference>
<dbReference type="GO" id="GO:0140888">
    <property type="term" value="P:interferon-mediated signaling pathway"/>
    <property type="evidence" value="ECO:0000315"/>
    <property type="project" value="MGI"/>
</dbReference>
<dbReference type="GO" id="GO:0030522">
    <property type="term" value="P:intracellular receptor signaling pathway"/>
    <property type="evidence" value="ECO:0000315"/>
    <property type="project" value="MGI"/>
</dbReference>
<dbReference type="GO" id="GO:0098544">
    <property type="term" value="P:maintenance of protein complex location"/>
    <property type="evidence" value="ECO:0000315"/>
    <property type="project" value="MGI"/>
</dbReference>
<dbReference type="GO" id="GO:0002385">
    <property type="term" value="P:mucosal immune response"/>
    <property type="evidence" value="ECO:0000315"/>
    <property type="project" value="MGI"/>
</dbReference>
<dbReference type="GO" id="GO:0051402">
    <property type="term" value="P:neuron apoptotic process"/>
    <property type="evidence" value="ECO:0000315"/>
    <property type="project" value="MGI"/>
</dbReference>
<dbReference type="GO" id="GO:0006862">
    <property type="term" value="P:nucleotide transport"/>
    <property type="evidence" value="ECO:0000250"/>
    <property type="project" value="UniProtKB"/>
</dbReference>
<dbReference type="GO" id="GO:0046530">
    <property type="term" value="P:photoreceptor cell differentiation"/>
    <property type="evidence" value="ECO:0000315"/>
    <property type="project" value="MGI"/>
</dbReference>
<dbReference type="GO" id="GO:0140454">
    <property type="term" value="P:protein aggregate center assembly"/>
    <property type="evidence" value="ECO:0000315"/>
    <property type="project" value="MGI"/>
</dbReference>
<dbReference type="GO" id="GO:0030163">
    <property type="term" value="P:protein catabolic process"/>
    <property type="evidence" value="ECO:0000315"/>
    <property type="project" value="MGI"/>
</dbReference>
<dbReference type="GO" id="GO:0034342">
    <property type="term" value="P:response to type III interferon"/>
    <property type="evidence" value="ECO:0000315"/>
    <property type="project" value="MGI"/>
</dbReference>
<dbReference type="GO" id="GO:0006986">
    <property type="term" value="P:response to unfolded protein"/>
    <property type="evidence" value="ECO:0000315"/>
    <property type="project" value="MGI"/>
</dbReference>
<dbReference type="GO" id="GO:0009615">
    <property type="term" value="P:response to virus"/>
    <property type="evidence" value="ECO:0000315"/>
    <property type="project" value="MGI"/>
</dbReference>
<dbReference type="GO" id="GO:0034162">
    <property type="term" value="P:toll-like receptor 9 signaling pathway"/>
    <property type="evidence" value="ECO:0000250"/>
    <property type="project" value="UniProtKB"/>
</dbReference>
<dbReference type="GO" id="GO:0006511">
    <property type="term" value="P:ubiquitin-dependent protein catabolic process"/>
    <property type="evidence" value="ECO:0000315"/>
    <property type="project" value="MGI"/>
</dbReference>
<dbReference type="InterPro" id="IPR051436">
    <property type="entry name" value="Autophagy-related_EPG5"/>
</dbReference>
<dbReference type="PANTHER" id="PTHR31139">
    <property type="entry name" value="ECTOPIC P GRANULES PROTEIN 5 HOMOLOG"/>
    <property type="match status" value="1"/>
</dbReference>
<dbReference type="PANTHER" id="PTHR31139:SF4">
    <property type="entry name" value="ECTOPIC P GRANULES PROTEIN 5 HOMOLOG"/>
    <property type="match status" value="1"/>
</dbReference>
<sequence length="2572" mass="290801">MAEAVKPRRAKAKASRTKGKEKKKHEALQTCDAGPLPETCREQESPCPASELKGDDLKSSADPQLHSDVCGWNESEMFDIPLTSLTIGDEGPPVQDTEDLKERGEVTAGDGDDEMELKVDPGDNVIAKGEPCKNFPEVEDHTLIQCGPPESTLQPDFPCTQQAVEGSHAREHPTRKQDEAALGCSKVFQNVSLHSSYEAKEVSQPPRVKKLYPELPAEIAEVPALVAVKPLLRSERLYPELPSQPEVTPFTKEQLKLLEPGSWLENVASYVEEFDNIAHQDRHEFYELLLNYSRCRKQLLLAEAELLTLMSDCHSAKSRLWHFKDEQMAVQGICADQVKVYGHHHYQRVEMNENVLGELKKLFDAKSEHLHQTLTLHSYTSVLSRLQVESYIFTLLNSSAALRSLAVYQADQVPKLTESIPSDVCQLKECISVLFMFTRRVSEDAQFHEDILLWLQKLVSVLQRVGCPGDHFFLLNHVLRCPAGIRKWAVPFIQIKVLNNPSGVFHFMQSLALLMSPVKNRAEFMCHMKPSEWKPSSSGPASGNWTLVDEAGEEDEDPETSWILLNEDDLVTLLSQFPFQELFQHLLGFKAKGDYLPETTRPQEMMKIFAFANSLVELLAVGLDTFNRARYRQFVKRIGYLIRMTLGYVSDHWAQYVSHSTGAGLTPQPYSMEKLQVEFDELFLRAVLHVLKAKRLGIWLFMSEMPFGTLSVQMLWKLLYLMHQVESGDLQQLCASLQPAECKRRLQDPEHFASFEKCLSSINSSEEICLLTAFAQMARARRTNVDEDFIKIIVLEIYEVSYVTLSTRETFSKVGRELLGAIAAVHPEIISVLLDRVQETIDQVGMVSLYLFKELPLYLWRPSAPEIAVIRDWLLNNNLTAVKNKLACVILEGLNWGFTEQGTLHLDQALHTEVALLVLEAYQKYLAQKPYTGLISESMKQVSYLASIVRYGETPETSFNQWAWNLILRLKLHKNDFGRQNFPVIPFCSTVPDMTESSMFHPLLKAVKSGLPIGCYLALAVTAVGHSLEKFCAEGIPLLGVLVQSRHLRAVVHALDKILPVFYPYQCYLLKNEQFLSNLLLFLQLDSGVPQGVTQQVTHRVAQHLTGAVHGDNVKLLSSMIQAHICVSTQPDGVGPVAVLEFWVQALISQHLWYREQPILFLMDHLCKTAFHLMQEDCVQKLLYQQHKNALGYHCDRSLLSSLVNWIVAGNITPSFVEGLSTSTQVWFAWTVLNMESIFEEDSQLRRVVERELVINAFSPDQALKKAQVQLKLPIVPSLQRLLIYRWAHQALVTPSDHPLLPLIWQKFFLLYLHRPGPQYGLPVDGCIGRRFFQSPSHVNLLKDMKRRLTEVADFHYAASKALRVPAEGSEGTPEGQAGTPGFLTSPELHRELVRLFNVYVLWLEDENFQKGDTYIPSLPKHYDVHRLAKVMQNQQDLWMEYVNMERIQHEFQETVALWTQAKLESHAAPCSSSAQLDFTDPLLAKARVLSNLEKHEAPHPPLLLHPVRPPVPLIPSAALLTQKDSTQLMCTDLNLLQQQARSATLRESQQVALDGELLETMPKQYVNREDQATLHLECRGSSGKKCQGAAVVTVQFEGMNKNEAVSQQIHVLQKEVRQLQAEAAQPPALNVVEAAVHAENLITALVNTYKLQPTPGVQKLGISLFFTVVDHVSDETQRHPPTRQFFTSCIEILGQVFVSGTKSECRKLLQTILKNRRLCSLLAPFFTPNAAPAEFIQLYERVVTCLREDNSDVIFMLLTKFDIQQWLNSTKPPLSDRTRLLESIHLALTAWGLEPEEDILMPFNLFCKHWTHLLLYQFPDQYSDVLRLLVQSSAEQLLSPECWKATLRALGCYAPSSQQGAASVESSGLHSASRVLLSDKQVMETVQWLSDFFYKLRLSKLDFKSFGLFSKWSPYMADVKTFLGYLVKRLTDLEIASLSQDPTASSKEVLRSLHAQIIQLFKPWILVLEDAESSHQRHYPWLESDTAVASSIVQLFSDCVGSLHTSFKDRLLPGDEGALRLHLLHYCETCTAPKMPEFILYAFHSAYQRLEWKDLHPDQRLMEAFFKVERGSPKSCFLFLGSVLCRVNWVSVLSDAWNPSPLPETQSMAVCLLFMMVLLAKEAQLVDEPDSPLLSLLGQTSSLSWHLVDLVSYQSVLGYFSSHYPPSVVLANDCSSELIVKLLKVSAGLSAHADGRKHVDIVPKCQAFTHQMVQFLSALEQTGKITFPALEREISKLLDDIIIFNPPDMDSQTRHMALSSFFVEVLMMMNNAAVPTAEFLAVSIRTWIGQRVHGLIVLPLLTAACQSLASVRHMAEITEACIMAYFKESSLDQNLGWGPVLVSLQVPQLTARDFLEECLALGSCLTLYVYLLQCLNSEQTVKNDMKMLLVVSGWLEQVYPSSAQEEAKLFLWWHQILQLSLIQLEQNDSVLTESVIRILLMLQSRQSLMAEERLSSGILGAIGLGRRSPLSNRFRVAARSMAAFLLVQVPAEDQIRLKPSSELHLAPKAQQVLTALESMTLSKQYVEYQDQILHALQFIRHPGHCLQNGKSFLALLVNRLYPEVHYLDNIR</sequence>
<reference key="1">
    <citation type="journal article" date="2009" name="PLoS Biol.">
        <title>Lineage-specific biology revealed by a finished genome assembly of the mouse.</title>
        <authorList>
            <person name="Church D.M."/>
            <person name="Goodstadt L."/>
            <person name="Hillier L.W."/>
            <person name="Zody M.C."/>
            <person name="Goldstein S."/>
            <person name="She X."/>
            <person name="Bult C.J."/>
            <person name="Agarwala R."/>
            <person name="Cherry J.L."/>
            <person name="DiCuccio M."/>
            <person name="Hlavina W."/>
            <person name="Kapustin Y."/>
            <person name="Meric P."/>
            <person name="Maglott D."/>
            <person name="Birtle Z."/>
            <person name="Marques A.C."/>
            <person name="Graves T."/>
            <person name="Zhou S."/>
            <person name="Teague B."/>
            <person name="Potamousis K."/>
            <person name="Churas C."/>
            <person name="Place M."/>
            <person name="Herschleb J."/>
            <person name="Runnheim R."/>
            <person name="Forrest D."/>
            <person name="Amos-Landgraf J."/>
            <person name="Schwartz D.C."/>
            <person name="Cheng Z."/>
            <person name="Lindblad-Toh K."/>
            <person name="Eichler E.E."/>
            <person name="Ponting C.P."/>
        </authorList>
    </citation>
    <scope>NUCLEOTIDE SEQUENCE [LARGE SCALE GENOMIC DNA]</scope>
    <source>
        <strain>C57BL/6J</strain>
    </source>
</reference>
<reference key="2">
    <citation type="journal article" date="2003" name="DNA Res.">
        <title>Prediction of the coding sequences of mouse homologues of KIAA gene: II. The complete nucleotide sequences of 400 mouse KIAA-homologous cDNAs identified by screening of terminal sequences of cDNA clones randomly sampled from size-fractionated libraries.</title>
        <authorList>
            <person name="Okazaki N."/>
            <person name="Kikuno R."/>
            <person name="Ohara R."/>
            <person name="Inamoto S."/>
            <person name="Aizawa H."/>
            <person name="Yuasa S."/>
            <person name="Nakajima D."/>
            <person name="Nagase T."/>
            <person name="Ohara O."/>
            <person name="Koga H."/>
        </authorList>
    </citation>
    <scope>NUCLEOTIDE SEQUENCE [LARGE SCALE MRNA] OF 996-2572</scope>
    <source>
        <tissue>Brain</tissue>
    </source>
</reference>
<reference key="3">
    <citation type="journal article" date="2010" name="Cell">
        <title>A tissue-specific atlas of mouse protein phosphorylation and expression.</title>
        <authorList>
            <person name="Huttlin E.L."/>
            <person name="Jedrychowski M.P."/>
            <person name="Elias J.E."/>
            <person name="Goswami T."/>
            <person name="Rad R."/>
            <person name="Beausoleil S.A."/>
            <person name="Villen J."/>
            <person name="Haas W."/>
            <person name="Sowa M.E."/>
            <person name="Gygi S.P."/>
        </authorList>
    </citation>
    <scope>IDENTIFICATION BY MASS SPECTROMETRY [LARGE SCALE ANALYSIS]</scope>
    <source>
        <tissue>Brain</tissue>
        <tissue>Kidney</tissue>
        <tissue>Liver</tissue>
        <tissue>Lung</tissue>
        <tissue>Pancreas</tissue>
        <tissue>Spleen</tissue>
        <tissue>Testis</tissue>
    </source>
</reference>
<evidence type="ECO:0000250" key="1">
    <source>
        <dbReference type="UniProtKB" id="Q9HCE0"/>
    </source>
</evidence>
<evidence type="ECO:0000255" key="2"/>
<evidence type="ECO:0000256" key="3">
    <source>
        <dbReference type="SAM" id="MobiDB-lite"/>
    </source>
</evidence>
<evidence type="ECO:0000305" key="4"/>
<proteinExistence type="evidence at protein level"/>
<keyword id="KW-0072">Autophagy</keyword>
<keyword id="KW-0175">Coiled coil</keyword>
<keyword id="KW-0963">Cytoplasm</keyword>
<keyword id="KW-0458">Lysosome</keyword>
<keyword id="KW-1185">Reference proteome</keyword>
<organism>
    <name type="scientific">Mus musculus</name>
    <name type="common">Mouse</name>
    <dbReference type="NCBI Taxonomy" id="10090"/>
    <lineage>
        <taxon>Eukaryota</taxon>
        <taxon>Metazoa</taxon>
        <taxon>Chordata</taxon>
        <taxon>Craniata</taxon>
        <taxon>Vertebrata</taxon>
        <taxon>Euteleostomi</taxon>
        <taxon>Mammalia</taxon>
        <taxon>Eutheria</taxon>
        <taxon>Euarchontoglires</taxon>
        <taxon>Glires</taxon>
        <taxon>Rodentia</taxon>
        <taxon>Myomorpha</taxon>
        <taxon>Muroidea</taxon>
        <taxon>Muridae</taxon>
        <taxon>Murinae</taxon>
        <taxon>Mus</taxon>
        <taxon>Mus</taxon>
    </lineage>
</organism>
<name>EPG5_MOUSE</name>
<protein>
    <recommendedName>
        <fullName>Ectopic P granules protein 5 homolog</fullName>
    </recommendedName>
</protein>
<accession>Q80TA9</accession>